<evidence type="ECO:0000305" key="1"/>
<reference key="1">
    <citation type="journal article" date="1978" name="J. Biol. Chem.">
        <title>Plasminostreptin, a protein proteinase inhibitor produced by Streptomyces antifibrinolyticus. III. Elucidation of the primary structure.</title>
        <authorList>
            <person name="Sugino H."/>
            <person name="Kakinuma A."/>
            <person name="Iwanaga S."/>
        </authorList>
    </citation>
    <scope>PROTEIN SEQUENCE</scope>
</reference>
<feature type="chain" id="PRO_0000208656" description="Plasminostreptin">
    <location>
        <begin position="1"/>
        <end position="109"/>
    </location>
</feature>
<feature type="site" description="Reactive bond">
    <location>
        <begin position="69"/>
        <end position="70"/>
    </location>
</feature>
<feature type="disulfide bond">
    <location>
        <begin position="31"/>
        <end position="46"/>
    </location>
</feature>
<feature type="disulfide bond">
    <location>
        <begin position="67"/>
        <end position="97"/>
    </location>
</feature>
<keyword id="KW-0903">Direct protein sequencing</keyword>
<keyword id="KW-1015">Disulfide bond</keyword>
<keyword id="KW-0646">Protease inhibitor</keyword>
<keyword id="KW-0964">Secreted</keyword>
<keyword id="KW-0722">Serine protease inhibitor</keyword>
<protein>
    <recommendedName>
        <fullName>Plasminostreptin</fullName>
        <shortName>PSN</shortName>
    </recommendedName>
</protein>
<comment type="function">
    <text>Inhibits plasmin, trypsin, subtilisin, and other microbial alkaline proteases.</text>
</comment>
<comment type="subunit">
    <text>Homodimer.</text>
</comment>
<comment type="subcellular location">
    <subcellularLocation>
        <location>Secreted</location>
    </subcellularLocation>
</comment>
<comment type="similarity">
    <text evidence="1">Belongs to the protease inhibitor I16 (SSI) family.</text>
</comment>
<dbReference type="PIR" id="A01241">
    <property type="entry name" value="XFSMF"/>
</dbReference>
<dbReference type="SMR" id="P01007"/>
<dbReference type="MEROPS" id="I16.001"/>
<dbReference type="GO" id="GO:0005576">
    <property type="term" value="C:extracellular region"/>
    <property type="evidence" value="ECO:0007669"/>
    <property type="project" value="UniProtKB-SubCell"/>
</dbReference>
<dbReference type="GO" id="GO:0004867">
    <property type="term" value="F:serine-type endopeptidase inhibitor activity"/>
    <property type="evidence" value="ECO:0007669"/>
    <property type="project" value="UniProtKB-UniRule"/>
</dbReference>
<dbReference type="Gene3D" id="3.30.350.10">
    <property type="entry name" value="Subtilisin inhibitor-like"/>
    <property type="match status" value="1"/>
</dbReference>
<dbReference type="HAMAP" id="MF_00778">
    <property type="entry name" value="SSI"/>
    <property type="match status" value="1"/>
</dbReference>
<dbReference type="InterPro" id="IPR000691">
    <property type="entry name" value="Prot_inh_I16_SSI"/>
</dbReference>
<dbReference type="InterPro" id="IPR020054">
    <property type="entry name" value="Prot_inh_SSI_I16_CS"/>
</dbReference>
<dbReference type="InterPro" id="IPR023549">
    <property type="entry name" value="Subtilisin_inhibitor"/>
</dbReference>
<dbReference type="InterPro" id="IPR036819">
    <property type="entry name" value="Subtilisin_inhibitor-like_sf"/>
</dbReference>
<dbReference type="Pfam" id="PF00720">
    <property type="entry name" value="SSI"/>
    <property type="match status" value="1"/>
</dbReference>
<dbReference type="PRINTS" id="PR00294">
    <property type="entry name" value="SSBTLNINHBTR"/>
</dbReference>
<dbReference type="SUPFAM" id="SSF55399">
    <property type="entry name" value="Subtilisin inhibitor"/>
    <property type="match status" value="1"/>
</dbReference>
<dbReference type="PROSITE" id="PS00999">
    <property type="entry name" value="SSI"/>
    <property type="match status" value="1"/>
</dbReference>
<name>SSI_STRAN</name>
<sequence length="109" mass="11399">GLYAPSALVLTMGHGNSAATVNPERAVTLNCAPTASGTHPAALQACAELRGAGGDFDALTVRGDVACTKQFDPVVVTVDGVWQGKRVSYERTFANECVKNSYGMTVFTF</sequence>
<organism>
    <name type="scientific">Streptomyces antifibrinolyticus</name>
    <dbReference type="NCBI Taxonomy" id="1891"/>
    <lineage>
        <taxon>Bacteria</taxon>
        <taxon>Bacillati</taxon>
        <taxon>Actinomycetota</taxon>
        <taxon>Actinomycetes</taxon>
        <taxon>Kitasatosporales</taxon>
        <taxon>Streptomycetaceae</taxon>
        <taxon>Streptomyces</taxon>
    </lineage>
</organism>
<accession>P01007</accession>
<proteinExistence type="evidence at protein level"/>